<protein>
    <recommendedName>
        <fullName>Transcriptional regulator MraZ</fullName>
    </recommendedName>
</protein>
<keyword id="KW-0963">Cytoplasm</keyword>
<keyword id="KW-0238">DNA-binding</keyword>
<keyword id="KW-1185">Reference proteome</keyword>
<keyword id="KW-0677">Repeat</keyword>
<keyword id="KW-0804">Transcription</keyword>
<keyword id="KW-0805">Transcription regulation</keyword>
<dbReference type="EMBL" id="AL954747">
    <property type="protein sequence ID" value="CAD84893.1"/>
    <property type="molecule type" value="Genomic_DNA"/>
</dbReference>
<dbReference type="RefSeq" id="WP_011111591.1">
    <property type="nucleotide sequence ID" value="NC_004757.1"/>
</dbReference>
<dbReference type="SMR" id="Q82VT2"/>
<dbReference type="STRING" id="228410.NE0982"/>
<dbReference type="GeneID" id="87104173"/>
<dbReference type="KEGG" id="neu:NE0982"/>
<dbReference type="eggNOG" id="COG2001">
    <property type="taxonomic scope" value="Bacteria"/>
</dbReference>
<dbReference type="HOGENOM" id="CLU_107907_2_0_4"/>
<dbReference type="OrthoDB" id="9807753at2"/>
<dbReference type="PhylomeDB" id="Q82VT2"/>
<dbReference type="Proteomes" id="UP000001416">
    <property type="component" value="Chromosome"/>
</dbReference>
<dbReference type="GO" id="GO:0005737">
    <property type="term" value="C:cytoplasm"/>
    <property type="evidence" value="ECO:0007669"/>
    <property type="project" value="UniProtKB-UniRule"/>
</dbReference>
<dbReference type="GO" id="GO:0009295">
    <property type="term" value="C:nucleoid"/>
    <property type="evidence" value="ECO:0007669"/>
    <property type="project" value="UniProtKB-SubCell"/>
</dbReference>
<dbReference type="GO" id="GO:0003700">
    <property type="term" value="F:DNA-binding transcription factor activity"/>
    <property type="evidence" value="ECO:0007669"/>
    <property type="project" value="UniProtKB-UniRule"/>
</dbReference>
<dbReference type="GO" id="GO:0000976">
    <property type="term" value="F:transcription cis-regulatory region binding"/>
    <property type="evidence" value="ECO:0007669"/>
    <property type="project" value="TreeGrafter"/>
</dbReference>
<dbReference type="GO" id="GO:2000143">
    <property type="term" value="P:negative regulation of DNA-templated transcription initiation"/>
    <property type="evidence" value="ECO:0007669"/>
    <property type="project" value="TreeGrafter"/>
</dbReference>
<dbReference type="CDD" id="cd16321">
    <property type="entry name" value="MraZ_C"/>
    <property type="match status" value="1"/>
</dbReference>
<dbReference type="CDD" id="cd16320">
    <property type="entry name" value="MraZ_N"/>
    <property type="match status" value="1"/>
</dbReference>
<dbReference type="Gene3D" id="3.40.1550.20">
    <property type="entry name" value="Transcriptional regulator MraZ domain"/>
    <property type="match status" value="1"/>
</dbReference>
<dbReference type="HAMAP" id="MF_01008">
    <property type="entry name" value="MraZ"/>
    <property type="match status" value="1"/>
</dbReference>
<dbReference type="InterPro" id="IPR003444">
    <property type="entry name" value="MraZ"/>
</dbReference>
<dbReference type="InterPro" id="IPR035644">
    <property type="entry name" value="MraZ_C"/>
</dbReference>
<dbReference type="InterPro" id="IPR020603">
    <property type="entry name" value="MraZ_dom"/>
</dbReference>
<dbReference type="InterPro" id="IPR035642">
    <property type="entry name" value="MraZ_N"/>
</dbReference>
<dbReference type="InterPro" id="IPR038619">
    <property type="entry name" value="MraZ_sf"/>
</dbReference>
<dbReference type="InterPro" id="IPR007159">
    <property type="entry name" value="SpoVT-AbrB_dom"/>
</dbReference>
<dbReference type="InterPro" id="IPR037914">
    <property type="entry name" value="SpoVT-AbrB_sf"/>
</dbReference>
<dbReference type="NCBIfam" id="TIGR00242">
    <property type="entry name" value="division/cell wall cluster transcriptional repressor MraZ"/>
    <property type="match status" value="1"/>
</dbReference>
<dbReference type="PANTHER" id="PTHR34701">
    <property type="entry name" value="TRANSCRIPTIONAL REGULATOR MRAZ"/>
    <property type="match status" value="1"/>
</dbReference>
<dbReference type="PANTHER" id="PTHR34701:SF1">
    <property type="entry name" value="TRANSCRIPTIONAL REGULATOR MRAZ"/>
    <property type="match status" value="1"/>
</dbReference>
<dbReference type="Pfam" id="PF02381">
    <property type="entry name" value="MraZ"/>
    <property type="match status" value="2"/>
</dbReference>
<dbReference type="SUPFAM" id="SSF89447">
    <property type="entry name" value="AbrB/MazE/MraZ-like"/>
    <property type="match status" value="1"/>
</dbReference>
<dbReference type="PROSITE" id="PS51740">
    <property type="entry name" value="SPOVT_ABRB"/>
    <property type="match status" value="2"/>
</dbReference>
<organism>
    <name type="scientific">Nitrosomonas europaea (strain ATCC 19718 / CIP 103999 / KCTC 2705 / NBRC 14298)</name>
    <dbReference type="NCBI Taxonomy" id="228410"/>
    <lineage>
        <taxon>Bacteria</taxon>
        <taxon>Pseudomonadati</taxon>
        <taxon>Pseudomonadota</taxon>
        <taxon>Betaproteobacteria</taxon>
        <taxon>Nitrosomonadales</taxon>
        <taxon>Nitrosomonadaceae</taxon>
        <taxon>Nitrosomonas</taxon>
    </lineage>
</organism>
<feature type="chain" id="PRO_0000108515" description="Transcriptional regulator MraZ">
    <location>
        <begin position="1"/>
        <end position="148"/>
    </location>
</feature>
<feature type="domain" description="SpoVT-AbrB 1" evidence="2">
    <location>
        <begin position="5"/>
        <end position="51"/>
    </location>
</feature>
<feature type="domain" description="SpoVT-AbrB 2" evidence="2">
    <location>
        <begin position="80"/>
        <end position="123"/>
    </location>
</feature>
<name>MRAZ_NITEU</name>
<evidence type="ECO:0000255" key="1">
    <source>
        <dbReference type="HAMAP-Rule" id="MF_01008"/>
    </source>
</evidence>
<evidence type="ECO:0000255" key="2">
    <source>
        <dbReference type="PROSITE-ProRule" id="PRU01076"/>
    </source>
</evidence>
<sequence>MFRGSTQLSLDSKGRLAIPAKYRDELFASCGGNIVVTADPSRCLLIYPQPVWEPIEKKLNSFPSLSPQIRSLQRLIIGNASDVEMDSSGRILISAPLRQFAGLQKEVVLAGQGEKFELWDMAKWDLEIDTATTYKDGDIPPELEGFSL</sequence>
<proteinExistence type="inferred from homology"/>
<reference key="1">
    <citation type="journal article" date="2003" name="J. Bacteriol.">
        <title>Complete genome sequence of the ammonia-oxidizing bacterium and obligate chemolithoautotroph Nitrosomonas europaea.</title>
        <authorList>
            <person name="Chain P."/>
            <person name="Lamerdin J.E."/>
            <person name="Larimer F.W."/>
            <person name="Regala W."/>
            <person name="Lao V."/>
            <person name="Land M.L."/>
            <person name="Hauser L."/>
            <person name="Hooper A.B."/>
            <person name="Klotz M.G."/>
            <person name="Norton J."/>
            <person name="Sayavedra-Soto L.A."/>
            <person name="Arciero D.M."/>
            <person name="Hommes N.G."/>
            <person name="Whittaker M.M."/>
            <person name="Arp D.J."/>
        </authorList>
    </citation>
    <scope>NUCLEOTIDE SEQUENCE [LARGE SCALE GENOMIC DNA]</scope>
    <source>
        <strain>ATCC 19718 / CIP 103999 / KCTC 2705 / NBRC 14298</strain>
    </source>
</reference>
<accession>Q82VT2</accession>
<gene>
    <name evidence="1" type="primary">mraZ</name>
    <name type="ordered locus">NE0982</name>
</gene>
<comment type="subunit">
    <text evidence="1">Forms oligomers.</text>
</comment>
<comment type="subcellular location">
    <subcellularLocation>
        <location evidence="1">Cytoplasm</location>
        <location evidence="1">Nucleoid</location>
    </subcellularLocation>
</comment>
<comment type="similarity">
    <text evidence="1">Belongs to the MraZ family.</text>
</comment>